<feature type="chain" id="PRO_1000080631" description="Ketol-acid reductoisomerase (NADP(+))">
    <location>
        <begin position="1"/>
        <end position="493"/>
    </location>
</feature>
<feature type="domain" description="KARI N-terminal Rossmann" evidence="2">
    <location>
        <begin position="14"/>
        <end position="208"/>
    </location>
</feature>
<feature type="domain" description="KARI C-terminal knotted 1" evidence="3">
    <location>
        <begin position="209"/>
        <end position="345"/>
    </location>
</feature>
<feature type="domain" description="KARI C-terminal knotted 2" evidence="3">
    <location>
        <begin position="346"/>
        <end position="486"/>
    </location>
</feature>
<feature type="active site" evidence="1">
    <location>
        <position position="132"/>
    </location>
</feature>
<feature type="binding site" evidence="1">
    <location>
        <begin position="45"/>
        <end position="48"/>
    </location>
    <ligand>
        <name>NADP(+)</name>
        <dbReference type="ChEBI" id="CHEBI:58349"/>
    </ligand>
</feature>
<feature type="binding site" evidence="1">
    <location>
        <position position="68"/>
    </location>
    <ligand>
        <name>NADP(+)</name>
        <dbReference type="ChEBI" id="CHEBI:58349"/>
    </ligand>
</feature>
<feature type="binding site" evidence="1">
    <location>
        <position position="76"/>
    </location>
    <ligand>
        <name>NADP(+)</name>
        <dbReference type="ChEBI" id="CHEBI:58349"/>
    </ligand>
</feature>
<feature type="binding site" evidence="1">
    <location>
        <position position="78"/>
    </location>
    <ligand>
        <name>NADP(+)</name>
        <dbReference type="ChEBI" id="CHEBI:58349"/>
    </ligand>
</feature>
<feature type="binding site" evidence="1">
    <location>
        <begin position="108"/>
        <end position="110"/>
    </location>
    <ligand>
        <name>NADP(+)</name>
        <dbReference type="ChEBI" id="CHEBI:58349"/>
    </ligand>
</feature>
<feature type="binding site" evidence="1">
    <location>
        <position position="158"/>
    </location>
    <ligand>
        <name>NADP(+)</name>
        <dbReference type="ChEBI" id="CHEBI:58349"/>
    </ligand>
</feature>
<feature type="binding site" evidence="1">
    <location>
        <position position="217"/>
    </location>
    <ligand>
        <name>Mg(2+)</name>
        <dbReference type="ChEBI" id="CHEBI:18420"/>
        <label>1</label>
    </ligand>
</feature>
<feature type="binding site" evidence="1">
    <location>
        <position position="217"/>
    </location>
    <ligand>
        <name>Mg(2+)</name>
        <dbReference type="ChEBI" id="CHEBI:18420"/>
        <label>2</label>
    </ligand>
</feature>
<feature type="binding site" evidence="1">
    <location>
        <position position="221"/>
    </location>
    <ligand>
        <name>Mg(2+)</name>
        <dbReference type="ChEBI" id="CHEBI:18420"/>
        <label>1</label>
    </ligand>
</feature>
<feature type="binding site" evidence="1">
    <location>
        <position position="390"/>
    </location>
    <ligand>
        <name>Mg(2+)</name>
        <dbReference type="ChEBI" id="CHEBI:18420"/>
        <label>2</label>
    </ligand>
</feature>
<feature type="binding site" evidence="1">
    <location>
        <position position="394"/>
    </location>
    <ligand>
        <name>Mg(2+)</name>
        <dbReference type="ChEBI" id="CHEBI:18420"/>
        <label>2</label>
    </ligand>
</feature>
<feature type="binding site" evidence="1">
    <location>
        <position position="415"/>
    </location>
    <ligand>
        <name>substrate</name>
    </ligand>
</feature>
<comment type="function">
    <text evidence="1">Involved in the biosynthesis of branched-chain amino acids (BCAA). Catalyzes an alkyl-migration followed by a ketol-acid reduction of (S)-2-acetolactate (S2AL) to yield (R)-2,3-dihydroxy-isovalerate. In the isomerase reaction, S2AL is rearranged via a Mg-dependent methyl migration to produce 3-hydroxy-3-methyl-2-ketobutyrate (HMKB). In the reductase reaction, this 2-ketoacid undergoes a metal-dependent reduction by NADPH to yield (R)-2,3-dihydroxy-isovalerate.</text>
</comment>
<comment type="catalytic activity">
    <reaction evidence="1">
        <text>(2R)-2,3-dihydroxy-3-methylbutanoate + NADP(+) = (2S)-2-acetolactate + NADPH + H(+)</text>
        <dbReference type="Rhea" id="RHEA:22068"/>
        <dbReference type="ChEBI" id="CHEBI:15378"/>
        <dbReference type="ChEBI" id="CHEBI:49072"/>
        <dbReference type="ChEBI" id="CHEBI:57783"/>
        <dbReference type="ChEBI" id="CHEBI:58349"/>
        <dbReference type="ChEBI" id="CHEBI:58476"/>
        <dbReference type="EC" id="1.1.1.86"/>
    </reaction>
</comment>
<comment type="catalytic activity">
    <reaction evidence="1">
        <text>(2R,3R)-2,3-dihydroxy-3-methylpentanoate + NADP(+) = (S)-2-ethyl-2-hydroxy-3-oxobutanoate + NADPH + H(+)</text>
        <dbReference type="Rhea" id="RHEA:13493"/>
        <dbReference type="ChEBI" id="CHEBI:15378"/>
        <dbReference type="ChEBI" id="CHEBI:49256"/>
        <dbReference type="ChEBI" id="CHEBI:49258"/>
        <dbReference type="ChEBI" id="CHEBI:57783"/>
        <dbReference type="ChEBI" id="CHEBI:58349"/>
        <dbReference type="EC" id="1.1.1.86"/>
    </reaction>
</comment>
<comment type="cofactor">
    <cofactor evidence="1">
        <name>Mg(2+)</name>
        <dbReference type="ChEBI" id="CHEBI:18420"/>
    </cofactor>
    <text evidence="1">Binds 2 magnesium ions per subunit.</text>
</comment>
<comment type="pathway">
    <text evidence="1">Amino-acid biosynthesis; L-isoleucine biosynthesis; L-isoleucine from 2-oxobutanoate: step 2/4.</text>
</comment>
<comment type="pathway">
    <text evidence="1">Amino-acid biosynthesis; L-valine biosynthesis; L-valine from pyruvate: step 2/4.</text>
</comment>
<comment type="similarity">
    <text evidence="1">Belongs to the ketol-acid reductoisomerase family.</text>
</comment>
<keyword id="KW-0028">Amino-acid biosynthesis</keyword>
<keyword id="KW-0100">Branched-chain amino acid biosynthesis</keyword>
<keyword id="KW-0460">Magnesium</keyword>
<keyword id="KW-0479">Metal-binding</keyword>
<keyword id="KW-0521">NADP</keyword>
<keyword id="KW-0560">Oxidoreductase</keyword>
<keyword id="KW-0677">Repeat</keyword>
<gene>
    <name evidence="1" type="primary">ilvC</name>
    <name type="ordered locus">HSM_1833</name>
</gene>
<protein>
    <recommendedName>
        <fullName evidence="1">Ketol-acid reductoisomerase (NADP(+))</fullName>
        <shortName evidence="1">KARI</shortName>
        <ecNumber evidence="1">1.1.1.86</ecNumber>
    </recommendedName>
    <alternativeName>
        <fullName evidence="1">Acetohydroxy-acid isomeroreductase</fullName>
        <shortName evidence="1">AHIR</shortName>
    </alternativeName>
    <alternativeName>
        <fullName evidence="1">Alpha-keto-beta-hydroxylacyl reductoisomerase</fullName>
    </alternativeName>
    <alternativeName>
        <fullName evidence="1">Ketol-acid reductoisomerase type 2</fullName>
    </alternativeName>
    <alternativeName>
        <fullName evidence="1">Ketol-acid reductoisomerase type II</fullName>
    </alternativeName>
</protein>
<sequence>MGNYFNTLNLRQQLDQLGRCRFMDREEFADEVNFLKGKKIVIIGCGAQGLNQGLNMRDSGLDIAYALRPEAIEEKRASFQRASENGFVVGTYQQLIPTADLVINLTPDKQHSKVVADVMPLIKQGAALGYSHGLNIVELGEKIRQDITVVMVAPKCPGTEVREEFKRGFGVPTLIAVHPENDPKGEGLAIAKAWAAATGGHRAGVLESSFVAEVKSDLMGEQTILCGMLQAGSLVCYDKLIADGKDPAYAGKLIQYGWETITEALKQGGITLMMDRLSNSAKLRAFSLSEQIKEKLDFLFKKHMDDIISGEFSRVMMEDWANGDANLLEWREQTGKTAFENAPKGENIKISEQEYFDHGVLMVAMVKAGVELAFDTMVETGIYEESAYYESLHELPLIANTIARKRLYEMNVVISDTAEYGNYLFANVAAPILAKEIIPTLKRGDLGESTPATEIDNILLRDVNDAIRQHPIELIGQELRGYMTDMKRISSQE</sequence>
<proteinExistence type="inferred from homology"/>
<name>ILVC_HISS2</name>
<organism>
    <name type="scientific">Histophilus somni (strain 2336)</name>
    <name type="common">Haemophilus somnus</name>
    <dbReference type="NCBI Taxonomy" id="228400"/>
    <lineage>
        <taxon>Bacteria</taxon>
        <taxon>Pseudomonadati</taxon>
        <taxon>Pseudomonadota</taxon>
        <taxon>Gammaproteobacteria</taxon>
        <taxon>Pasteurellales</taxon>
        <taxon>Pasteurellaceae</taxon>
        <taxon>Histophilus</taxon>
    </lineage>
</organism>
<dbReference type="EC" id="1.1.1.86" evidence="1"/>
<dbReference type="EMBL" id="CP000947">
    <property type="protein sequence ID" value="ACA31620.1"/>
    <property type="molecule type" value="Genomic_DNA"/>
</dbReference>
<dbReference type="RefSeq" id="WP_012340927.1">
    <property type="nucleotide sequence ID" value="NC_010519.1"/>
</dbReference>
<dbReference type="SMR" id="B0UWE8"/>
<dbReference type="STRING" id="228400.HSM_1833"/>
<dbReference type="GeneID" id="31488140"/>
<dbReference type="KEGG" id="hsm:HSM_1833"/>
<dbReference type="HOGENOM" id="CLU_551905_0_0_6"/>
<dbReference type="UniPathway" id="UPA00047">
    <property type="reaction ID" value="UER00056"/>
</dbReference>
<dbReference type="UniPathway" id="UPA00049">
    <property type="reaction ID" value="UER00060"/>
</dbReference>
<dbReference type="GO" id="GO:0005829">
    <property type="term" value="C:cytosol"/>
    <property type="evidence" value="ECO:0007669"/>
    <property type="project" value="TreeGrafter"/>
</dbReference>
<dbReference type="GO" id="GO:0004455">
    <property type="term" value="F:ketol-acid reductoisomerase activity"/>
    <property type="evidence" value="ECO:0007669"/>
    <property type="project" value="UniProtKB-UniRule"/>
</dbReference>
<dbReference type="GO" id="GO:0000287">
    <property type="term" value="F:magnesium ion binding"/>
    <property type="evidence" value="ECO:0007669"/>
    <property type="project" value="UniProtKB-UniRule"/>
</dbReference>
<dbReference type="GO" id="GO:0009097">
    <property type="term" value="P:isoleucine biosynthetic process"/>
    <property type="evidence" value="ECO:0007669"/>
    <property type="project" value="UniProtKB-UniRule"/>
</dbReference>
<dbReference type="GO" id="GO:0009099">
    <property type="term" value="P:L-valine biosynthetic process"/>
    <property type="evidence" value="ECO:0007669"/>
    <property type="project" value="UniProtKB-UniRule"/>
</dbReference>
<dbReference type="FunFam" id="1.10.1040.10:FF:000007">
    <property type="entry name" value="Ketol-acid reductoisomerase (NADP(+))"/>
    <property type="match status" value="1"/>
</dbReference>
<dbReference type="FunFam" id="3.40.50.720:FF:000043">
    <property type="entry name" value="Ketol-acid reductoisomerase (NADP(+))"/>
    <property type="match status" value="1"/>
</dbReference>
<dbReference type="Gene3D" id="1.10.1040.10">
    <property type="entry name" value="N-(1-d-carboxylethyl)-l-norvaline Dehydrogenase, domain 2"/>
    <property type="match status" value="1"/>
</dbReference>
<dbReference type="Gene3D" id="3.40.50.720">
    <property type="entry name" value="NAD(P)-binding Rossmann-like Domain"/>
    <property type="match status" value="1"/>
</dbReference>
<dbReference type="HAMAP" id="MF_00435">
    <property type="entry name" value="IlvC"/>
    <property type="match status" value="1"/>
</dbReference>
<dbReference type="InterPro" id="IPR008927">
    <property type="entry name" value="6-PGluconate_DH-like_C_sf"/>
</dbReference>
<dbReference type="InterPro" id="IPR013328">
    <property type="entry name" value="6PGD_dom2"/>
</dbReference>
<dbReference type="InterPro" id="IPR013023">
    <property type="entry name" value="KARI"/>
</dbReference>
<dbReference type="InterPro" id="IPR000506">
    <property type="entry name" value="KARI_C"/>
</dbReference>
<dbReference type="InterPro" id="IPR013116">
    <property type="entry name" value="KARI_N"/>
</dbReference>
<dbReference type="InterPro" id="IPR036291">
    <property type="entry name" value="NAD(P)-bd_dom_sf"/>
</dbReference>
<dbReference type="NCBIfam" id="TIGR00465">
    <property type="entry name" value="ilvC"/>
    <property type="match status" value="1"/>
</dbReference>
<dbReference type="NCBIfam" id="NF003557">
    <property type="entry name" value="PRK05225.1"/>
    <property type="match status" value="1"/>
</dbReference>
<dbReference type="PANTHER" id="PTHR21371">
    <property type="entry name" value="KETOL-ACID REDUCTOISOMERASE, MITOCHONDRIAL"/>
    <property type="match status" value="1"/>
</dbReference>
<dbReference type="PANTHER" id="PTHR21371:SF1">
    <property type="entry name" value="KETOL-ACID REDUCTOISOMERASE, MITOCHONDRIAL"/>
    <property type="match status" value="1"/>
</dbReference>
<dbReference type="Pfam" id="PF01450">
    <property type="entry name" value="KARI_C"/>
    <property type="match status" value="2"/>
</dbReference>
<dbReference type="Pfam" id="PF07991">
    <property type="entry name" value="KARI_N"/>
    <property type="match status" value="1"/>
</dbReference>
<dbReference type="SUPFAM" id="SSF48179">
    <property type="entry name" value="6-phosphogluconate dehydrogenase C-terminal domain-like"/>
    <property type="match status" value="2"/>
</dbReference>
<dbReference type="SUPFAM" id="SSF51735">
    <property type="entry name" value="NAD(P)-binding Rossmann-fold domains"/>
    <property type="match status" value="1"/>
</dbReference>
<dbReference type="PROSITE" id="PS51851">
    <property type="entry name" value="KARI_C"/>
    <property type="match status" value="2"/>
</dbReference>
<dbReference type="PROSITE" id="PS51850">
    <property type="entry name" value="KARI_N"/>
    <property type="match status" value="1"/>
</dbReference>
<reference key="1">
    <citation type="submission" date="2008-02" db="EMBL/GenBank/DDBJ databases">
        <title>Complete sequence of Haemophilus somnus 2336.</title>
        <authorList>
            <consortium name="US DOE Joint Genome Institute"/>
            <person name="Siddaramappa S."/>
            <person name="Duncan A.J."/>
            <person name="Challacombe J.F."/>
            <person name="Rainey D."/>
            <person name="Gillaspy A.F."/>
            <person name="Carson M."/>
            <person name="Gipson J."/>
            <person name="Gipson M."/>
            <person name="Bruce D."/>
            <person name="Detter J.C."/>
            <person name="Han C.S."/>
            <person name="Land M."/>
            <person name="Tapia R."/>
            <person name="Thompson L.S."/>
            <person name="Orvis J."/>
            <person name="Zaitshik J."/>
            <person name="Barnes G."/>
            <person name="Brettin T.S."/>
            <person name="Dyer D.W."/>
            <person name="Inzana T.J."/>
        </authorList>
    </citation>
    <scope>NUCLEOTIDE SEQUENCE [LARGE SCALE GENOMIC DNA]</scope>
    <source>
        <strain>2336</strain>
    </source>
</reference>
<accession>B0UWE8</accession>
<evidence type="ECO:0000255" key="1">
    <source>
        <dbReference type="HAMAP-Rule" id="MF_00435"/>
    </source>
</evidence>
<evidence type="ECO:0000255" key="2">
    <source>
        <dbReference type="PROSITE-ProRule" id="PRU01197"/>
    </source>
</evidence>
<evidence type="ECO:0000255" key="3">
    <source>
        <dbReference type="PROSITE-ProRule" id="PRU01198"/>
    </source>
</evidence>